<accession>A6ZQF3</accession>
<comment type="similarity">
    <text evidence="1">Belongs to the UPF0508 family.</text>
</comment>
<name>YJS1_YEAS7</name>
<dbReference type="EMBL" id="AAFW02000044">
    <property type="protein sequence ID" value="EDN63205.1"/>
    <property type="molecule type" value="Genomic_DNA"/>
</dbReference>
<dbReference type="HOGENOM" id="CLU_457199_0_0_1"/>
<dbReference type="Proteomes" id="UP000007060">
    <property type="component" value="Unassembled WGS sequence"/>
</dbReference>
<gene>
    <name type="ORF">SCY_3114</name>
</gene>
<evidence type="ECO:0000305" key="1"/>
<reference key="1">
    <citation type="journal article" date="2007" name="Proc. Natl. Acad. Sci. U.S.A.">
        <title>Genome sequencing and comparative analysis of Saccharomyces cerevisiae strain YJM789.</title>
        <authorList>
            <person name="Wei W."/>
            <person name="McCusker J.H."/>
            <person name="Hyman R.W."/>
            <person name="Jones T."/>
            <person name="Ning Y."/>
            <person name="Cao Z."/>
            <person name="Gu Z."/>
            <person name="Bruno D."/>
            <person name="Miranda M."/>
            <person name="Nguyen M."/>
            <person name="Wilhelmy J."/>
            <person name="Komp C."/>
            <person name="Tamse R."/>
            <person name="Wang X."/>
            <person name="Jia P."/>
            <person name="Luedi P."/>
            <person name="Oefner P.J."/>
            <person name="David L."/>
            <person name="Dietrich F.S."/>
            <person name="Li Y."/>
            <person name="Davis R.W."/>
            <person name="Steinmetz L.M."/>
        </authorList>
    </citation>
    <scope>NUCLEOTIDE SEQUENCE [LARGE SCALE GENOMIC DNA]</scope>
    <source>
        <strain>YJM789</strain>
    </source>
</reference>
<sequence length="611" mass="69338">MEIFKEEEEEAFSAIEGIIYACEVYDPVPRHLHKSKTKIINAAKLIIETHLSYYTILNNISDIQAYLSTWLRDLGTTGSYQTILSESISLMFDRTVSIFRKCTIEGGFPHLIARLYLRLKSYQKLLSDAGLKIFFSSYDYAFGAAYNLVNCSEYRYDEVHYISNGTYSLVASMKIDPAEVIKREHFRLTIPKFNISNILIEIFHLLDGLAFFKVNPDSLSISTASAETIFHSISEGNHQVLELGRSLMFPLLKTGDFEICRIDDAGAVITFTEAKDVKLEIISLDEVSWVMQWKSCLQNYERKAANDSSFIKTHLQFKKANNFNEDNNGLGLIVDRNIPTDDFMLASTNRQSPPPSNTGCSLHRSKPLHIPLSSVIREDFYDSSLNERISKDGDSSCESFSGAESILSDYDFHDNEFFNNQSPHYFSEHIDNNSREVVITDENTIISLENTQVSRWSNYSWQKISPHQLQVSIIQLRMGNFIVAYNSDHNLHQFKIRLCDDIKCIQSTEQDIQIRVPLGAIMCSVTGILNIRTKDADKLLRVLSFYTTDHTEAVSHSNNQDATASPLSSVSSAMDLKHSLQKCSSTIMPQELTQDVIGSKSDLISNIRQKI</sequence>
<protein>
    <recommendedName>
        <fullName>UPF0508 protein SCY_3114</fullName>
    </recommendedName>
</protein>
<proteinExistence type="inferred from homology"/>
<organism>
    <name type="scientific">Saccharomyces cerevisiae (strain YJM789)</name>
    <name type="common">Baker's yeast</name>
    <dbReference type="NCBI Taxonomy" id="307796"/>
    <lineage>
        <taxon>Eukaryota</taxon>
        <taxon>Fungi</taxon>
        <taxon>Dikarya</taxon>
        <taxon>Ascomycota</taxon>
        <taxon>Saccharomycotina</taxon>
        <taxon>Saccharomycetes</taxon>
        <taxon>Saccharomycetales</taxon>
        <taxon>Saccharomycetaceae</taxon>
        <taxon>Saccharomyces</taxon>
    </lineage>
</organism>
<feature type="chain" id="PRO_0000311663" description="UPF0508 protein SCY_3114">
    <location>
        <begin position="1"/>
        <end position="611"/>
    </location>
</feature>